<organism>
    <name type="scientific">Rattus norvegicus</name>
    <name type="common">Rat</name>
    <dbReference type="NCBI Taxonomy" id="10116"/>
    <lineage>
        <taxon>Eukaryota</taxon>
        <taxon>Metazoa</taxon>
        <taxon>Chordata</taxon>
        <taxon>Craniata</taxon>
        <taxon>Vertebrata</taxon>
        <taxon>Euteleostomi</taxon>
        <taxon>Mammalia</taxon>
        <taxon>Eutheria</taxon>
        <taxon>Euarchontoglires</taxon>
        <taxon>Glires</taxon>
        <taxon>Rodentia</taxon>
        <taxon>Myomorpha</taxon>
        <taxon>Muroidea</taxon>
        <taxon>Muridae</taxon>
        <taxon>Murinae</taxon>
        <taxon>Rattus</taxon>
    </lineage>
</organism>
<comment type="function">
    <text evidence="1 7">Monomeric heme protein which primary function is to store oxygen and facilitate its diffusion within muscle tissues. Reversibly binds oxygen through a pentacoordinated heme iron and enables its timely and efficient release as needed during periods of heightened demand (PubMed:3118370). Depending on the oxidative conditions of tissues and cells, and in addition to its ability to bind oxygen, it also has a nitrite reductase activity whereby it regulates the production of bioactive nitric oxide. Under stress conditions, like hypoxia and anoxia, it also protects cells against reactive oxygen species thanks to its pseudoperoxidase activity (By similarity).</text>
</comment>
<comment type="catalytic activity">
    <reaction evidence="1">
        <text>Fe(III)-heme b-[protein] + nitric oxide + H2O = Fe(II)-heme b-[protein] + nitrite + 2 H(+)</text>
        <dbReference type="Rhea" id="RHEA:77711"/>
        <dbReference type="Rhea" id="RHEA-COMP:18975"/>
        <dbReference type="Rhea" id="RHEA-COMP:18976"/>
        <dbReference type="ChEBI" id="CHEBI:15377"/>
        <dbReference type="ChEBI" id="CHEBI:15378"/>
        <dbReference type="ChEBI" id="CHEBI:16301"/>
        <dbReference type="ChEBI" id="CHEBI:16480"/>
        <dbReference type="ChEBI" id="CHEBI:55376"/>
        <dbReference type="ChEBI" id="CHEBI:60344"/>
    </reaction>
    <physiologicalReaction direction="right-to-left" evidence="1">
        <dbReference type="Rhea" id="RHEA:77713"/>
    </physiologicalReaction>
</comment>
<comment type="catalytic activity">
    <reaction evidence="1">
        <text>H2O2 + AH2 = A + 2 H2O</text>
        <dbReference type="Rhea" id="RHEA:30275"/>
        <dbReference type="ChEBI" id="CHEBI:13193"/>
        <dbReference type="ChEBI" id="CHEBI:15377"/>
        <dbReference type="ChEBI" id="CHEBI:16240"/>
        <dbReference type="ChEBI" id="CHEBI:17499"/>
    </reaction>
</comment>
<comment type="subunit">
    <text evidence="2">Monomeric.</text>
</comment>
<comment type="subcellular location">
    <subcellularLocation>
        <location evidence="1">Cytoplasm</location>
        <location evidence="1">Sarcoplasm</location>
    </subcellularLocation>
</comment>
<comment type="similarity">
    <text evidence="6">Belongs to the globin family.</text>
</comment>
<proteinExistence type="evidence at protein level"/>
<sequence>MGLSDGEWQMVLNIWGKVEGDLAGHGQEVLISLFKAHPETLEKFDKFKNLKSEEEMKSSEDLKKHGCTVLTALGTILKKKGQHAAEIQPLAQSHATKHKIPVKYLEFISEVIIQVLKKRYSGDFGADAQGAMSKALELFRNDIAAKYKELGFQG</sequence>
<reference key="1">
    <citation type="submission" date="1999-10" db="EMBL/GenBank/DDBJ databases">
        <authorList>
            <person name="Santos R.A."/>
            <person name="Giannocco G."/>
            <person name="Poyares L.L."/>
            <person name="Nunes M.T."/>
        </authorList>
    </citation>
    <scope>NUCLEOTIDE SEQUENCE [MRNA]</scope>
    <source>
        <strain>Wistar</strain>
    </source>
</reference>
<reference key="2">
    <citation type="journal article" date="2004" name="Genome Res.">
        <title>The status, quality, and expansion of the NIH full-length cDNA project: the Mammalian Gene Collection (MGC).</title>
        <authorList>
            <consortium name="The MGC Project Team"/>
        </authorList>
    </citation>
    <scope>NUCLEOTIDE SEQUENCE [LARGE SCALE MRNA]</scope>
    <source>
        <tissue>Heart</tissue>
    </source>
</reference>
<reference key="3">
    <citation type="submission" date="2006-11" db="UniProtKB">
        <authorList>
            <person name="Lubec G."/>
            <person name="Afjehi-Sadat L."/>
        </authorList>
    </citation>
    <scope>PROTEIN SEQUENCE OF 65-78</scope>
    <scope>IDENTIFICATION BY MASS SPECTROMETRY</scope>
    <source>
        <strain>Sprague-Dawley</strain>
        <tissue>Spinal cord</tissue>
    </source>
</reference>
<reference key="4">
    <citation type="journal article" date="1987" name="Proc. Natl. Acad. Sci. U.S.A.">
        <title>Myoglobin-mediated oxygen delivery to mitochondria of isolated cardiac myocytes.</title>
        <authorList>
            <person name="Wittenberg B.A."/>
            <person name="Wittenberg J.B."/>
        </authorList>
    </citation>
    <scope>FUNCTION</scope>
</reference>
<reference key="5">
    <citation type="journal article" date="2012" name="Nat. Commun.">
        <title>Quantitative maps of protein phosphorylation sites across 14 different rat organs and tissues.</title>
        <authorList>
            <person name="Lundby A."/>
            <person name="Secher A."/>
            <person name="Lage K."/>
            <person name="Nordsborg N.B."/>
            <person name="Dmytriyev A."/>
            <person name="Lundby C."/>
            <person name="Olsen J.V."/>
        </authorList>
    </citation>
    <scope>PHOSPHORYLATION [LARGE SCALE ANALYSIS] AT SER-4; SER-32; SER-121 AND SER-133</scope>
    <scope>IDENTIFICATION BY MASS SPECTROMETRY [LARGE SCALE ANALYSIS]</scope>
</reference>
<feature type="chain" id="PRO_0000053341" description="Myoglobin">
    <location>
        <begin position="1"/>
        <end position="154"/>
    </location>
</feature>
<feature type="domain" description="Globin" evidence="6">
    <location>
        <begin position="2"/>
        <end position="148"/>
    </location>
</feature>
<feature type="binding site" evidence="5">
    <location>
        <position position="65"/>
    </location>
    <ligand>
        <name>nitrite</name>
        <dbReference type="ChEBI" id="CHEBI:16301"/>
    </ligand>
</feature>
<feature type="binding site" evidence="3 6">
    <location>
        <position position="65"/>
    </location>
    <ligand>
        <name>O2</name>
        <dbReference type="ChEBI" id="CHEBI:15379"/>
    </ligand>
</feature>
<feature type="binding site" description="proximal binding residue" evidence="1">
    <location>
        <position position="94"/>
    </location>
    <ligand>
        <name>heme b</name>
        <dbReference type="ChEBI" id="CHEBI:60344"/>
    </ligand>
    <ligandPart>
        <name>Fe</name>
        <dbReference type="ChEBI" id="CHEBI:18248"/>
    </ligandPart>
</feature>
<feature type="modified residue" description="Phosphoserine" evidence="10">
    <location>
        <position position="4"/>
    </location>
</feature>
<feature type="modified residue" description="Phosphoserine" evidence="10">
    <location>
        <position position="32"/>
    </location>
</feature>
<feature type="modified residue" description="Phosphothreonine" evidence="4">
    <location>
        <position position="68"/>
    </location>
</feature>
<feature type="modified residue" description="Phosphoserine" evidence="10">
    <location>
        <position position="121"/>
    </location>
</feature>
<feature type="modified residue" description="Phosphoserine" evidence="10">
    <location>
        <position position="133"/>
    </location>
</feature>
<keyword id="KW-0963">Cytoplasm</keyword>
<keyword id="KW-0903">Direct protein sequencing</keyword>
<keyword id="KW-0349">Heme</keyword>
<keyword id="KW-0408">Iron</keyword>
<keyword id="KW-0479">Metal-binding</keyword>
<keyword id="KW-0514">Muscle protein</keyword>
<keyword id="KW-0560">Oxidoreductase</keyword>
<keyword id="KW-0561">Oxygen transport</keyword>
<keyword id="KW-0597">Phosphoprotein</keyword>
<keyword id="KW-1185">Reference proteome</keyword>
<keyword id="KW-0813">Transport</keyword>
<protein>
    <recommendedName>
        <fullName evidence="8">Myoglobin</fullName>
    </recommendedName>
    <alternativeName>
        <fullName evidence="1">Nitrite reductase MB</fullName>
        <ecNumber evidence="1">1.7.-.-</ecNumber>
    </alternativeName>
    <alternativeName>
        <fullName evidence="1">Pseudoperoxidase MB</fullName>
        <ecNumber evidence="1">1.11.1.-</ecNumber>
    </alternativeName>
</protein>
<evidence type="ECO:0000250" key="1">
    <source>
        <dbReference type="UniProtKB" id="P02144"/>
    </source>
</evidence>
<evidence type="ECO:0000250" key="2">
    <source>
        <dbReference type="UniProtKB" id="P02185"/>
    </source>
</evidence>
<evidence type="ECO:0000250" key="3">
    <source>
        <dbReference type="UniProtKB" id="P02189"/>
    </source>
</evidence>
<evidence type="ECO:0000250" key="4">
    <source>
        <dbReference type="UniProtKB" id="P04247"/>
    </source>
</evidence>
<evidence type="ECO:0000250" key="5">
    <source>
        <dbReference type="UniProtKB" id="P68082"/>
    </source>
</evidence>
<evidence type="ECO:0000255" key="6">
    <source>
        <dbReference type="PROSITE-ProRule" id="PRU00238"/>
    </source>
</evidence>
<evidence type="ECO:0000269" key="7">
    <source>
    </source>
</evidence>
<evidence type="ECO:0000303" key="8">
    <source>
    </source>
</evidence>
<evidence type="ECO:0000312" key="9">
    <source>
        <dbReference type="RGD" id="620411"/>
    </source>
</evidence>
<evidence type="ECO:0007744" key="10">
    <source>
    </source>
</evidence>
<gene>
    <name evidence="9" type="primary">Mb</name>
</gene>
<name>MYG_RAT</name>
<dbReference type="EC" id="1.7.-.-" evidence="1"/>
<dbReference type="EC" id="1.11.1.-" evidence="1"/>
<dbReference type="EMBL" id="AF197916">
    <property type="protein sequence ID" value="AAF05848.1"/>
    <property type="molecule type" value="mRNA"/>
</dbReference>
<dbReference type="EMBL" id="BC070511">
    <property type="protein sequence ID" value="AAH70511.1"/>
    <property type="molecule type" value="mRNA"/>
</dbReference>
<dbReference type="RefSeq" id="NP_067599.1">
    <property type="nucleotide sequence ID" value="NM_021588.2"/>
</dbReference>
<dbReference type="SMR" id="Q9QZ76"/>
<dbReference type="BioGRID" id="248730">
    <property type="interactions" value="3"/>
</dbReference>
<dbReference type="FunCoup" id="Q9QZ76">
    <property type="interactions" value="81"/>
</dbReference>
<dbReference type="IntAct" id="Q9QZ76">
    <property type="interactions" value="1"/>
</dbReference>
<dbReference type="MINT" id="Q9QZ76"/>
<dbReference type="STRING" id="10116.ENSRNOP00000006184"/>
<dbReference type="GlyGen" id="Q9QZ76">
    <property type="glycosylation" value="1 site, 1 O-linked glycan (1 site)"/>
</dbReference>
<dbReference type="iPTMnet" id="Q9QZ76"/>
<dbReference type="PhosphoSitePlus" id="Q9QZ76"/>
<dbReference type="PaxDb" id="10116-ENSRNOP00000006184"/>
<dbReference type="Ensembl" id="ENSRNOT00000006184.7">
    <property type="protein sequence ID" value="ENSRNOP00000006184.3"/>
    <property type="gene ID" value="ENSRNOG00000004583.7"/>
</dbReference>
<dbReference type="GeneID" id="59108"/>
<dbReference type="KEGG" id="rno:59108"/>
<dbReference type="UCSC" id="RGD:620411">
    <property type="organism name" value="rat"/>
</dbReference>
<dbReference type="AGR" id="RGD:620411"/>
<dbReference type="CTD" id="4151"/>
<dbReference type="RGD" id="620411">
    <property type="gene designation" value="Mb"/>
</dbReference>
<dbReference type="eggNOG" id="KOG3378">
    <property type="taxonomic scope" value="Eukaryota"/>
</dbReference>
<dbReference type="GeneTree" id="ENSGT00940000160809"/>
<dbReference type="HOGENOM" id="CLU_003827_18_0_1"/>
<dbReference type="InParanoid" id="Q9QZ76"/>
<dbReference type="OMA" id="VIIRMFQ"/>
<dbReference type="OrthoDB" id="11352at9989"/>
<dbReference type="PhylomeDB" id="Q9QZ76"/>
<dbReference type="TreeFam" id="TF332967"/>
<dbReference type="Reactome" id="R-RNO-8981607">
    <property type="pathway name" value="Intracellular oxygen transport"/>
</dbReference>
<dbReference type="PRO" id="PR:Q9QZ76"/>
<dbReference type="Proteomes" id="UP000002494">
    <property type="component" value="Chromosome 7"/>
</dbReference>
<dbReference type="Bgee" id="ENSRNOG00000004583">
    <property type="expression patterns" value="Expressed in heart and 19 other cell types or tissues"/>
</dbReference>
<dbReference type="ExpressionAtlas" id="Q9QZ76">
    <property type="expression patterns" value="baseline and differential"/>
</dbReference>
<dbReference type="GO" id="GO:0005829">
    <property type="term" value="C:cytosol"/>
    <property type="evidence" value="ECO:0000314"/>
    <property type="project" value="RGD"/>
</dbReference>
<dbReference type="GO" id="GO:0005739">
    <property type="term" value="C:mitochondrion"/>
    <property type="evidence" value="ECO:0000314"/>
    <property type="project" value="RGD"/>
</dbReference>
<dbReference type="GO" id="GO:0016528">
    <property type="term" value="C:sarcoplasm"/>
    <property type="evidence" value="ECO:0000250"/>
    <property type="project" value="UniProtKB"/>
</dbReference>
<dbReference type="GO" id="GO:0020037">
    <property type="term" value="F:heme binding"/>
    <property type="evidence" value="ECO:0000303"/>
    <property type="project" value="RGD"/>
</dbReference>
<dbReference type="GO" id="GO:0046872">
    <property type="term" value="F:metal ion binding"/>
    <property type="evidence" value="ECO:0007669"/>
    <property type="project" value="UniProtKB-KW"/>
</dbReference>
<dbReference type="GO" id="GO:0098809">
    <property type="term" value="F:nitrite reductase activity"/>
    <property type="evidence" value="ECO:0000250"/>
    <property type="project" value="UniProtKB"/>
</dbReference>
<dbReference type="GO" id="GO:0019825">
    <property type="term" value="F:oxygen binding"/>
    <property type="evidence" value="ECO:0000314"/>
    <property type="project" value="RGD"/>
</dbReference>
<dbReference type="GO" id="GO:0005344">
    <property type="term" value="F:oxygen carrier activity"/>
    <property type="evidence" value="ECO:0000250"/>
    <property type="project" value="UniProtKB"/>
</dbReference>
<dbReference type="GO" id="GO:0004601">
    <property type="term" value="F:peroxidase activity"/>
    <property type="evidence" value="ECO:0000250"/>
    <property type="project" value="UniProtKB"/>
</dbReference>
<dbReference type="GO" id="GO:0050873">
    <property type="term" value="P:brown fat cell differentiation"/>
    <property type="evidence" value="ECO:0000266"/>
    <property type="project" value="RGD"/>
</dbReference>
<dbReference type="GO" id="GO:0071732">
    <property type="term" value="P:cellular response to nitric oxide"/>
    <property type="evidence" value="ECO:0000270"/>
    <property type="project" value="RGD"/>
</dbReference>
<dbReference type="GO" id="GO:0009631">
    <property type="term" value="P:cold acclimation"/>
    <property type="evidence" value="ECO:0000270"/>
    <property type="project" value="RGD"/>
</dbReference>
<dbReference type="GO" id="GO:0043353">
    <property type="term" value="P:enucleate erythrocyte differentiation"/>
    <property type="evidence" value="ECO:0000266"/>
    <property type="project" value="RGD"/>
</dbReference>
<dbReference type="GO" id="GO:0007507">
    <property type="term" value="P:heart development"/>
    <property type="evidence" value="ECO:0000266"/>
    <property type="project" value="RGD"/>
</dbReference>
<dbReference type="GO" id="GO:0015671">
    <property type="term" value="P:oxygen transport"/>
    <property type="evidence" value="ECO:0000314"/>
    <property type="project" value="RGD"/>
</dbReference>
<dbReference type="GO" id="GO:0019430">
    <property type="term" value="P:removal of superoxide radicals"/>
    <property type="evidence" value="ECO:0000250"/>
    <property type="project" value="UniProtKB"/>
</dbReference>
<dbReference type="GO" id="GO:0001975">
    <property type="term" value="P:response to amphetamine"/>
    <property type="evidence" value="ECO:0000270"/>
    <property type="project" value="RGD"/>
</dbReference>
<dbReference type="GO" id="GO:0009725">
    <property type="term" value="P:response to hormone"/>
    <property type="evidence" value="ECO:0000314"/>
    <property type="project" value="RGD"/>
</dbReference>
<dbReference type="GO" id="GO:0042542">
    <property type="term" value="P:response to hydrogen peroxide"/>
    <property type="evidence" value="ECO:0000314"/>
    <property type="project" value="RGD"/>
</dbReference>
<dbReference type="GO" id="GO:0001666">
    <property type="term" value="P:response to hypoxia"/>
    <property type="evidence" value="ECO:0000266"/>
    <property type="project" value="RGD"/>
</dbReference>
<dbReference type="GO" id="GO:0002931">
    <property type="term" value="P:response to ischemia"/>
    <property type="evidence" value="ECO:0000270"/>
    <property type="project" value="RGD"/>
</dbReference>
<dbReference type="GO" id="GO:0014850">
    <property type="term" value="P:response to muscle activity"/>
    <property type="evidence" value="ECO:0000314"/>
    <property type="project" value="RGD"/>
</dbReference>
<dbReference type="GO" id="GO:0080033">
    <property type="term" value="P:response to nitrite"/>
    <property type="evidence" value="ECO:0000270"/>
    <property type="project" value="RGD"/>
</dbReference>
<dbReference type="GO" id="GO:0097066">
    <property type="term" value="P:response to thyroid hormone"/>
    <property type="evidence" value="ECO:0000270"/>
    <property type="project" value="RGD"/>
</dbReference>
<dbReference type="GO" id="GO:0031444">
    <property type="term" value="P:slow-twitch skeletal muscle fiber contraction"/>
    <property type="evidence" value="ECO:0000270"/>
    <property type="project" value="RGD"/>
</dbReference>
<dbReference type="Gene3D" id="6.10.140.2100">
    <property type="match status" value="1"/>
</dbReference>
<dbReference type="Gene3D" id="6.10.140.2110">
    <property type="match status" value="1"/>
</dbReference>
<dbReference type="InterPro" id="IPR000971">
    <property type="entry name" value="Globin"/>
</dbReference>
<dbReference type="InterPro" id="IPR009050">
    <property type="entry name" value="Globin-like_sf"/>
</dbReference>
<dbReference type="InterPro" id="IPR002335">
    <property type="entry name" value="Myoglobin"/>
</dbReference>
<dbReference type="PANTHER" id="PTHR47132">
    <property type="entry name" value="MYOGLOBIN"/>
    <property type="match status" value="1"/>
</dbReference>
<dbReference type="PANTHER" id="PTHR47132:SF1">
    <property type="entry name" value="MYOGLOBIN"/>
    <property type="match status" value="1"/>
</dbReference>
<dbReference type="Pfam" id="PF00042">
    <property type="entry name" value="Globin"/>
    <property type="match status" value="1"/>
</dbReference>
<dbReference type="PRINTS" id="PR00613">
    <property type="entry name" value="MYOGLOBIN"/>
</dbReference>
<dbReference type="SUPFAM" id="SSF46458">
    <property type="entry name" value="Globin-like"/>
    <property type="match status" value="1"/>
</dbReference>
<dbReference type="PROSITE" id="PS01033">
    <property type="entry name" value="GLOBIN"/>
    <property type="match status" value="1"/>
</dbReference>
<accession>Q9QZ76</accession>